<gene>
    <name type="primary">LTBR</name>
    <name type="synonym">D12S370</name>
    <name type="synonym">TNFCR</name>
    <name type="synonym">TNFR3</name>
    <name type="synonym">TNFRSF3</name>
</gene>
<comment type="function">
    <text evidence="4 5 8">Receptor for the heterotrimeric lymphotoxin containing LTA and LTB, and for TNFS14/LIGHT (PubMed:24248355). Activates NF-kappa-B signaling pathway upon stimulation with lymphotoxin (LTA(1)-LTB(2)) (PubMed:24248355). Promotes apoptosis via TRAF3 and TRAF5. May play a role in the development of lymphoid organs.</text>
</comment>
<comment type="subunit">
    <text evidence="6 7 9 11 12">Self-associates; dimerization and trimerization are promoted by lymphotoxin (LTA(1)-LTB(2)) (PubMed:29507355). Associates with TRAF3 (PubMed:8663299). Associates with TRAF4 (PubMed:9626059). Associates with TRAF5 (PubMed:9511754). Interacts with Aedes aegypti lymphotoxin beta receptor inhibitor; the interaction reduces dimerization and trimerization of LTBR induced by lymphotoxin (LTA(1)-LTB(2)) (PubMed:29507355, PubMed:38248473).</text>
</comment>
<comment type="subunit">
    <text evidence="10">(Microbial infection) Interacts with HCV core protein.</text>
</comment>
<comment type="interaction">
    <interactant intactId="EBI-3509981">
        <id>P36941</id>
    </interactant>
    <interactant intactId="EBI-2339219">
        <id>Q08426</id>
        <label>EHHADH</label>
    </interactant>
    <organismsDiffer>false</organismsDiffer>
    <experiments>3</experiments>
</comment>
<comment type="interaction">
    <interactant intactId="EBI-3509981">
        <id>P36941</id>
    </interactant>
    <interactant intactId="EBI-3509981">
        <id>P36941</id>
        <label>LTBR</label>
    </interactant>
    <organismsDiffer>false</organismsDiffer>
    <experiments>2</experiments>
</comment>
<comment type="interaction">
    <interactant intactId="EBI-3509981">
        <id>P36941</id>
    </interactant>
    <interactant intactId="EBI-712367">
        <id>Q9UI14</id>
        <label>RABAC1</label>
    </interactant>
    <organismsDiffer>false</organismsDiffer>
    <experiments>3</experiments>
</comment>
<comment type="interaction">
    <interactant intactId="EBI-3509981">
        <id>P36941</id>
    </interactant>
    <interactant intactId="EBI-524131">
        <id>O43557</id>
        <label>TNFSF14</label>
    </interactant>
    <organismsDiffer>false</organismsDiffer>
    <experiments>3</experiments>
</comment>
<comment type="interaction">
    <interactant intactId="EBI-3509981">
        <id>P36941</id>
    </interactant>
    <interactant intactId="EBI-355744">
        <id>Q12933</id>
        <label>TRAF2</label>
    </interactant>
    <organismsDiffer>false</organismsDiffer>
    <experiments>4</experiments>
</comment>
<comment type="interaction">
    <interactant intactId="EBI-3509981">
        <id>P36941</id>
    </interactant>
    <interactant intactId="EBI-357631">
        <id>Q13114</id>
        <label>TRAF3</label>
    </interactant>
    <organismsDiffer>false</organismsDiffer>
    <experiments>4</experiments>
</comment>
<comment type="interaction">
    <interactant intactId="EBI-3509981">
        <id>P36941</id>
    </interactant>
    <interactant intactId="EBI-2623509">
        <id>Q15326</id>
        <label>ZMYND11</label>
    </interactant>
    <organismsDiffer>false</organismsDiffer>
    <experiments>5</experiments>
</comment>
<comment type="interaction">
    <interactant intactId="EBI-3509981">
        <id>P36941</id>
    </interactant>
    <interactant intactId="EBI-8847394">
        <id>PRO_0000037666</id>
        <dbReference type="UniProtKB" id="P29846"/>
    </interactant>
    <organismsDiffer>true</organismsDiffer>
    <experiments>5</experiments>
</comment>
<comment type="subcellular location">
    <subcellularLocation>
        <location>Membrane</location>
        <topology>Single-pass type I membrane protein</topology>
    </subcellularLocation>
</comment>
<comment type="alternative products">
    <event type="alternative splicing"/>
    <isoform>
        <id>P36941-1</id>
        <name>1</name>
        <sequence type="displayed"/>
    </isoform>
    <isoform>
        <id>P36941-2</id>
        <name>2</name>
        <sequence type="described" ref="VSP_047533"/>
    </isoform>
</comment>
<dbReference type="EMBL" id="L04270">
    <property type="protein sequence ID" value="AAA36757.1"/>
    <property type="molecule type" value="mRNA"/>
</dbReference>
<dbReference type="EMBL" id="AK293187">
    <property type="protein sequence ID" value="BAH11468.1"/>
    <property type="molecule type" value="mRNA"/>
</dbReference>
<dbReference type="EMBL" id="AC005840">
    <property type="status" value="NOT_ANNOTATED_CDS"/>
    <property type="molecule type" value="Genomic_DNA"/>
</dbReference>
<dbReference type="EMBL" id="CH471116">
    <property type="protein sequence ID" value="EAW88801.1"/>
    <property type="molecule type" value="Genomic_DNA"/>
</dbReference>
<dbReference type="EMBL" id="CH471116">
    <property type="protein sequence ID" value="EAW88802.1"/>
    <property type="molecule type" value="Genomic_DNA"/>
</dbReference>
<dbReference type="EMBL" id="BC026262">
    <property type="protein sequence ID" value="AAH26262.1"/>
    <property type="molecule type" value="mRNA"/>
</dbReference>
<dbReference type="CCDS" id="CCDS59233.1">
    <molecule id="P36941-2"/>
</dbReference>
<dbReference type="CCDS" id="CCDS8544.1">
    <molecule id="P36941-1"/>
</dbReference>
<dbReference type="PIR" id="I54182">
    <property type="entry name" value="I54182"/>
</dbReference>
<dbReference type="RefSeq" id="NP_001257916.1">
    <molecule id="P36941-2"/>
    <property type="nucleotide sequence ID" value="NM_001270987.2"/>
</dbReference>
<dbReference type="RefSeq" id="NP_002333.1">
    <molecule id="P36941-1"/>
    <property type="nucleotide sequence ID" value="NM_002342.3"/>
</dbReference>
<dbReference type="PDB" id="1RF3">
    <property type="method" value="X-ray"/>
    <property type="resolution" value="3.50 A"/>
    <property type="chains" value="B=385-408"/>
</dbReference>
<dbReference type="PDB" id="4MXW">
    <property type="method" value="X-ray"/>
    <property type="resolution" value="3.60 A"/>
    <property type="chains" value="R/S=41-211"/>
</dbReference>
<dbReference type="PDBsum" id="1RF3"/>
<dbReference type="PDBsum" id="4MXW"/>
<dbReference type="SMR" id="P36941"/>
<dbReference type="BioGRID" id="110233">
    <property type="interactions" value="97"/>
</dbReference>
<dbReference type="ComplexPortal" id="CPX-8947">
    <property type="entry name" value="Lymphotoxin-alpha-beta-LTBR receptor complex"/>
</dbReference>
<dbReference type="ComplexPortal" id="CPX-9310">
    <property type="entry name" value="TNFSF14-LTBR receptor complex"/>
</dbReference>
<dbReference type="CORUM" id="P36941"/>
<dbReference type="DIP" id="DIP-2928N"/>
<dbReference type="ELM" id="P36941"/>
<dbReference type="FunCoup" id="P36941">
    <property type="interactions" value="856"/>
</dbReference>
<dbReference type="IntAct" id="P36941">
    <property type="interactions" value="82"/>
</dbReference>
<dbReference type="MINT" id="P36941"/>
<dbReference type="STRING" id="9606.ENSP00000228918"/>
<dbReference type="ChEMBL" id="CHEMBL1250360"/>
<dbReference type="GlyCosmos" id="P36941">
    <property type="glycosylation" value="2 sites, No reported glycans"/>
</dbReference>
<dbReference type="GlyGen" id="P36941">
    <property type="glycosylation" value="7 sites, 2 N-linked glycans (1 site), 1 O-linked glycan (5 sites)"/>
</dbReference>
<dbReference type="iPTMnet" id="P36941"/>
<dbReference type="PhosphoSitePlus" id="P36941"/>
<dbReference type="SwissPalm" id="P36941"/>
<dbReference type="BioMuta" id="LTBR"/>
<dbReference type="DMDM" id="549090"/>
<dbReference type="CPTAC" id="CPTAC-2234"/>
<dbReference type="jPOST" id="P36941"/>
<dbReference type="MassIVE" id="P36941"/>
<dbReference type="PaxDb" id="9606-ENSP00000228918"/>
<dbReference type="PeptideAtlas" id="P36941"/>
<dbReference type="ProteomicsDB" id="24401"/>
<dbReference type="ProteomicsDB" id="55239">
    <molecule id="P36941-1"/>
</dbReference>
<dbReference type="Pumba" id="P36941"/>
<dbReference type="ABCD" id="P36941">
    <property type="antibodies" value="7 sequenced antibodies"/>
</dbReference>
<dbReference type="Antibodypedia" id="10740">
    <property type="antibodies" value="912 antibodies from 37 providers"/>
</dbReference>
<dbReference type="DNASU" id="4055"/>
<dbReference type="Ensembl" id="ENST00000228918.9">
    <molecule id="P36941-1"/>
    <property type="protein sequence ID" value="ENSP00000228918.4"/>
    <property type="gene ID" value="ENSG00000111321.11"/>
</dbReference>
<dbReference type="Ensembl" id="ENST00000539925.5">
    <molecule id="P36941-2"/>
    <property type="protein sequence ID" value="ENSP00000440875.1"/>
    <property type="gene ID" value="ENSG00000111321.11"/>
</dbReference>
<dbReference type="GeneID" id="4055"/>
<dbReference type="KEGG" id="hsa:4055"/>
<dbReference type="MANE-Select" id="ENST00000228918.9">
    <property type="protein sequence ID" value="ENSP00000228918.4"/>
    <property type="RefSeq nucleotide sequence ID" value="NM_002342.3"/>
    <property type="RefSeq protein sequence ID" value="NP_002333.1"/>
</dbReference>
<dbReference type="UCSC" id="uc001qny.3">
    <molecule id="P36941-1"/>
    <property type="organism name" value="human"/>
</dbReference>
<dbReference type="AGR" id="HGNC:6718"/>
<dbReference type="CTD" id="4055"/>
<dbReference type="DisGeNET" id="4055"/>
<dbReference type="GeneCards" id="LTBR"/>
<dbReference type="HGNC" id="HGNC:6718">
    <property type="gene designation" value="LTBR"/>
</dbReference>
<dbReference type="HPA" id="ENSG00000111321">
    <property type="expression patterns" value="Low tissue specificity"/>
</dbReference>
<dbReference type="MalaCards" id="LTBR"/>
<dbReference type="MIM" id="600979">
    <property type="type" value="gene"/>
</dbReference>
<dbReference type="neXtProt" id="NX_P36941"/>
<dbReference type="OpenTargets" id="ENSG00000111321"/>
<dbReference type="PharmGKB" id="PA30481"/>
<dbReference type="VEuPathDB" id="HostDB:ENSG00000111321"/>
<dbReference type="eggNOG" id="ENOG502S4WF">
    <property type="taxonomic scope" value="Eukaryota"/>
</dbReference>
<dbReference type="GeneTree" id="ENSGT00940000162178"/>
<dbReference type="HOGENOM" id="CLU_052594_0_0_1"/>
<dbReference type="InParanoid" id="P36941"/>
<dbReference type="OMA" id="NNCVPCK"/>
<dbReference type="OrthoDB" id="10031141at2759"/>
<dbReference type="PAN-GO" id="P36941">
    <property type="GO annotations" value="2 GO annotations based on evolutionary models"/>
</dbReference>
<dbReference type="PhylomeDB" id="P36941"/>
<dbReference type="TreeFam" id="TF331157"/>
<dbReference type="PathwayCommons" id="P36941"/>
<dbReference type="Reactome" id="R-HSA-5668541">
    <property type="pathway name" value="TNFR2 non-canonical NF-kB pathway"/>
</dbReference>
<dbReference type="Reactome" id="R-HSA-5676594">
    <property type="pathway name" value="TNF receptor superfamily (TNFSF) members mediating non-canonical NF-kB pathway"/>
</dbReference>
<dbReference type="SignaLink" id="P36941"/>
<dbReference type="SIGNOR" id="P36941"/>
<dbReference type="BioGRID-ORCS" id="4055">
    <property type="hits" value="14 hits in 1164 CRISPR screens"/>
</dbReference>
<dbReference type="ChiTaRS" id="LTBR">
    <property type="organism name" value="human"/>
</dbReference>
<dbReference type="EvolutionaryTrace" id="P36941"/>
<dbReference type="GeneWiki" id="Lymphotoxin_beta_receptor"/>
<dbReference type="GenomeRNAi" id="4055"/>
<dbReference type="Pharos" id="P36941">
    <property type="development level" value="Tbio"/>
</dbReference>
<dbReference type="PRO" id="PR:P36941"/>
<dbReference type="Proteomes" id="UP000005640">
    <property type="component" value="Chromosome 12"/>
</dbReference>
<dbReference type="RNAct" id="P36941">
    <property type="molecule type" value="protein"/>
</dbReference>
<dbReference type="Bgee" id="ENSG00000111321">
    <property type="expression patterns" value="Expressed in lower esophagus mucosa and 171 other cell types or tissues"/>
</dbReference>
<dbReference type="ExpressionAtlas" id="P36941">
    <property type="expression patterns" value="baseline and differential"/>
</dbReference>
<dbReference type="GO" id="GO:0005794">
    <property type="term" value="C:Golgi apparatus"/>
    <property type="evidence" value="ECO:0000314"/>
    <property type="project" value="HPA"/>
</dbReference>
<dbReference type="GO" id="GO:0005886">
    <property type="term" value="C:plasma membrane"/>
    <property type="evidence" value="ECO:0000304"/>
    <property type="project" value="Reactome"/>
</dbReference>
<dbReference type="GO" id="GO:0042802">
    <property type="term" value="F:identical protein binding"/>
    <property type="evidence" value="ECO:0000353"/>
    <property type="project" value="IntAct"/>
</dbReference>
<dbReference type="GO" id="GO:0031625">
    <property type="term" value="F:ubiquitin protein ligase binding"/>
    <property type="evidence" value="ECO:0000353"/>
    <property type="project" value="UniProtKB"/>
</dbReference>
<dbReference type="GO" id="GO:0006915">
    <property type="term" value="P:apoptotic process"/>
    <property type="evidence" value="ECO:0007669"/>
    <property type="project" value="UniProtKB-KW"/>
</dbReference>
<dbReference type="GO" id="GO:0071260">
    <property type="term" value="P:cellular response to mechanical stimulus"/>
    <property type="evidence" value="ECO:0000270"/>
    <property type="project" value="UniProtKB"/>
</dbReference>
<dbReference type="GO" id="GO:0048534">
    <property type="term" value="P:hematopoietic or lymphoid organ development"/>
    <property type="evidence" value="ECO:0007669"/>
    <property type="project" value="InterPro"/>
</dbReference>
<dbReference type="GO" id="GO:0006955">
    <property type="term" value="P:immune response"/>
    <property type="evidence" value="ECO:0007669"/>
    <property type="project" value="InterPro"/>
</dbReference>
<dbReference type="GO" id="GO:0043011">
    <property type="term" value="P:myeloid dendritic cell differentiation"/>
    <property type="evidence" value="ECO:0007669"/>
    <property type="project" value="Ensembl"/>
</dbReference>
<dbReference type="GO" id="GO:0043123">
    <property type="term" value="P:positive regulation of canonical NF-kappaB signal transduction"/>
    <property type="evidence" value="ECO:0000270"/>
    <property type="project" value="UniProtKB"/>
</dbReference>
<dbReference type="GO" id="GO:2001238">
    <property type="term" value="P:positive regulation of extrinsic apoptotic signaling pathway"/>
    <property type="evidence" value="ECO:0000315"/>
    <property type="project" value="UniProtKB"/>
</dbReference>
<dbReference type="GO" id="GO:0046330">
    <property type="term" value="P:positive regulation of JNK cascade"/>
    <property type="evidence" value="ECO:0000315"/>
    <property type="project" value="UniProtKB"/>
</dbReference>
<dbReference type="GO" id="GO:0007165">
    <property type="term" value="P:signal transduction"/>
    <property type="evidence" value="ECO:0000304"/>
    <property type="project" value="ProtInc"/>
</dbReference>
<dbReference type="CDD" id="cd10578">
    <property type="entry name" value="TNFRSF3"/>
    <property type="match status" value="1"/>
</dbReference>
<dbReference type="FunFam" id="2.10.50.10:FF:000007">
    <property type="entry name" value="TNF receptor superfamily member 14"/>
    <property type="match status" value="1"/>
</dbReference>
<dbReference type="FunFam" id="2.10.50.10:FF:000009">
    <property type="entry name" value="Tumor necrosis factor receptor superfamily member 14"/>
    <property type="match status" value="1"/>
</dbReference>
<dbReference type="FunFam" id="2.10.50.10:FF:000035">
    <property type="entry name" value="Tumor necrosis factor receptor superfamily member 3"/>
    <property type="match status" value="1"/>
</dbReference>
<dbReference type="Gene3D" id="2.10.50.10">
    <property type="entry name" value="Tumor Necrosis Factor Receptor, subunit A, domain 2"/>
    <property type="match status" value="3"/>
</dbReference>
<dbReference type="InterPro" id="IPR001368">
    <property type="entry name" value="TNFR/NGFR_Cys_rich_reg"/>
</dbReference>
<dbReference type="InterPro" id="IPR017349">
    <property type="entry name" value="TNFR_3_LTBR"/>
</dbReference>
<dbReference type="InterPro" id="IPR033997">
    <property type="entry name" value="TNFRSF3_N"/>
</dbReference>
<dbReference type="PANTHER" id="PTHR47607">
    <property type="entry name" value="TUMOR NECROSIS FACTOR RECEPTOR SUBFAMILY MEMBER 3"/>
    <property type="match status" value="1"/>
</dbReference>
<dbReference type="PANTHER" id="PTHR47607:SF1">
    <property type="entry name" value="TUMOR NECROSIS FACTOR RECEPTOR SUPERFAMILY MEMBER 3"/>
    <property type="match status" value="1"/>
</dbReference>
<dbReference type="Pfam" id="PF00020">
    <property type="entry name" value="TNFR_c6"/>
    <property type="match status" value="3"/>
</dbReference>
<dbReference type="PIRSF" id="PIRSF037999">
    <property type="entry name" value="TNFR_3_LTBR"/>
    <property type="match status" value="1"/>
</dbReference>
<dbReference type="PRINTS" id="PR01920">
    <property type="entry name" value="TNFACTORR3"/>
</dbReference>
<dbReference type="SMART" id="SM00208">
    <property type="entry name" value="TNFR"/>
    <property type="match status" value="4"/>
</dbReference>
<dbReference type="SUPFAM" id="SSF57586">
    <property type="entry name" value="TNF receptor-like"/>
    <property type="match status" value="2"/>
</dbReference>
<dbReference type="PROSITE" id="PS00652">
    <property type="entry name" value="TNFR_NGFR_1"/>
    <property type="match status" value="2"/>
</dbReference>
<dbReference type="PROSITE" id="PS50050">
    <property type="entry name" value="TNFR_NGFR_2"/>
    <property type="match status" value="3"/>
</dbReference>
<keyword id="KW-0002">3D-structure</keyword>
<keyword id="KW-0025">Alternative splicing</keyword>
<keyword id="KW-0053">Apoptosis</keyword>
<keyword id="KW-1015">Disulfide bond</keyword>
<keyword id="KW-0325">Glycoprotein</keyword>
<keyword id="KW-0945">Host-virus interaction</keyword>
<keyword id="KW-0472">Membrane</keyword>
<keyword id="KW-0597">Phosphoprotein</keyword>
<keyword id="KW-1267">Proteomics identification</keyword>
<keyword id="KW-0675">Receptor</keyword>
<keyword id="KW-1185">Reference proteome</keyword>
<keyword id="KW-0677">Repeat</keyword>
<keyword id="KW-0732">Signal</keyword>
<keyword id="KW-0812">Transmembrane</keyword>
<keyword id="KW-1133">Transmembrane helix</keyword>
<name>TNR3_HUMAN</name>
<feature type="signal peptide" evidence="1">
    <location>
        <begin position="1"/>
        <end position="30"/>
    </location>
</feature>
<feature type="chain" id="PRO_0000034552" description="Tumor necrosis factor receptor superfamily member 3">
    <location>
        <begin position="31"/>
        <end position="435"/>
    </location>
</feature>
<feature type="topological domain" description="Extracellular" evidence="1">
    <location>
        <begin position="31"/>
        <end position="227"/>
    </location>
</feature>
<feature type="transmembrane region" description="Helical" evidence="1">
    <location>
        <begin position="228"/>
        <end position="248"/>
    </location>
</feature>
<feature type="topological domain" description="Cytoplasmic" evidence="1">
    <location>
        <begin position="249"/>
        <end position="435"/>
    </location>
</feature>
<feature type="repeat" description="TNFR-Cys 1">
    <location>
        <begin position="42"/>
        <end position="81"/>
    </location>
</feature>
<feature type="repeat" description="TNFR-Cys 2">
    <location>
        <begin position="82"/>
        <end position="124"/>
    </location>
</feature>
<feature type="repeat" description="TNFR-Cys 3">
    <location>
        <begin position="125"/>
        <end position="168"/>
    </location>
</feature>
<feature type="repeat" description="TNFR-Cys 4">
    <location>
        <begin position="169"/>
        <end position="211"/>
    </location>
</feature>
<feature type="region of interest" description="Disordered" evidence="3">
    <location>
        <begin position="373"/>
        <end position="435"/>
    </location>
</feature>
<feature type="compositionally biased region" description="Pro residues" evidence="3">
    <location>
        <begin position="373"/>
        <end position="399"/>
    </location>
</feature>
<feature type="compositionally biased region" description="Basic and acidic residues" evidence="3">
    <location>
        <begin position="403"/>
        <end position="417"/>
    </location>
</feature>
<feature type="compositionally biased region" description="Polar residues" evidence="3">
    <location>
        <begin position="421"/>
        <end position="435"/>
    </location>
</feature>
<feature type="modified residue" description="Phosphoserine" evidence="16">
    <location>
        <position position="323"/>
    </location>
</feature>
<feature type="glycosylation site" description="N-linked (GlcNAc...) asparagine" evidence="1">
    <location>
        <position position="40"/>
    </location>
</feature>
<feature type="glycosylation site" description="N-linked (GlcNAc...) asparagine" evidence="1">
    <location>
        <position position="177"/>
    </location>
</feature>
<feature type="disulfide bond" evidence="2">
    <location>
        <begin position="43"/>
        <end position="58"/>
    </location>
</feature>
<feature type="disulfide bond" evidence="2">
    <location>
        <begin position="59"/>
        <end position="72"/>
    </location>
</feature>
<feature type="disulfide bond" evidence="2">
    <location>
        <begin position="62"/>
        <end position="80"/>
    </location>
</feature>
<feature type="disulfide bond" evidence="2">
    <location>
        <begin position="83"/>
        <end position="98"/>
    </location>
</feature>
<feature type="disulfide bond" evidence="2">
    <location>
        <begin position="101"/>
        <end position="116"/>
    </location>
</feature>
<feature type="disulfide bond" evidence="2">
    <location>
        <begin position="104"/>
        <end position="124"/>
    </location>
</feature>
<feature type="disulfide bond" evidence="2">
    <location>
        <begin position="126"/>
        <end position="132"/>
    </location>
</feature>
<feature type="disulfide bond" evidence="2">
    <location>
        <begin position="139"/>
        <end position="148"/>
    </location>
</feature>
<feature type="disulfide bond" evidence="2">
    <location>
        <begin position="142"/>
        <end position="167"/>
    </location>
</feature>
<feature type="disulfide bond" evidence="2">
    <location>
        <begin position="170"/>
        <end position="185"/>
    </location>
</feature>
<feature type="splice variant" id="VSP_047533" description="In isoform 2." evidence="13">
    <original>MLLPWATSAPGLAWGPLVLGLFGLLAASQPQA</original>
    <variation>MEATGISLASQLK</variation>
    <location>
        <begin position="1"/>
        <end position="32"/>
    </location>
</feature>
<feature type="sequence variant" id="VAR_052346" description="In dbSNP:rs35681405.">
    <original>V</original>
    <variation>I</variation>
    <location>
        <position position="274"/>
    </location>
</feature>
<feature type="mutagenesis site" description="Does not affect interaction with Aedes aegypti lymphotoxin beta receptor inhibitor." evidence="7">
    <original>N</original>
    <variation>G</variation>
    <location>
        <position position="40"/>
    </location>
</feature>
<feature type="mutagenesis site" description="Does not affect interaction with A.aegypti lymphotoxin beta receptor inhibitor." evidence="7">
    <original>N</original>
    <variation>G</variation>
    <location>
        <position position="177"/>
    </location>
</feature>
<feature type="sequence conflict" description="In Ref. 2; BAH11468." evidence="14" ref="2">
    <original>R</original>
    <variation>W</variation>
    <location>
        <position position="76"/>
    </location>
</feature>
<feature type="sequence conflict" description="In Ref. 2; BAH11468." evidence="14" ref="2">
    <original>W</original>
    <variation>R</variation>
    <location>
        <position position="410"/>
    </location>
</feature>
<accession>P36941</accession>
<accession>B7Z1D2</accession>
<accession>D3DUR2</accession>
<accession>F5GXE7</accession>
<sequence length="435" mass="46709">MLLPWATSAPGLAWGPLVLGLFGLLAASQPQAVPPYASENQTCRDQEKEYYEPQHRICCSRCPPGTYVSAKCSRIRDTVCATCAENSYNEHWNYLTICQLCRPCDPVMGLEEIAPCTSKRKTQCRCQPGMFCAAWALECTHCELLSDCPPGTEAELKDEVGKGNNHCVPCKAGHFQNTSSPSARCQPHTRCENQGLVEAAPGTAQSDTTCKNPLEPLPPEMSGTMLMLAVLLPLAFFLLLATVFSCIWKSHPSLCRKLGSLLKRRPQGEGPNPVAGSWEPPKAHPYFPDLVQPLLPISGDVSPVSTGLPAAPVLEAGVPQQQSPLDLTREPQLEPGEQSQVAHGTNGIHVTGGSMTITGNIYIYNGPVLGGPPGPGDLPATPEPPYPIPEEGDPGPPGLSTPHQEDGKAWHLAETEHCGATPSNRGPRNQFITHD</sequence>
<evidence type="ECO:0000255" key="1"/>
<evidence type="ECO:0000255" key="2">
    <source>
        <dbReference type="PROSITE-ProRule" id="PRU00206"/>
    </source>
</evidence>
<evidence type="ECO:0000256" key="3">
    <source>
        <dbReference type="SAM" id="MobiDB-lite"/>
    </source>
</evidence>
<evidence type="ECO:0000269" key="4">
    <source>
    </source>
</evidence>
<evidence type="ECO:0000269" key="5">
    <source>
    </source>
</evidence>
<evidence type="ECO:0000269" key="6">
    <source>
    </source>
</evidence>
<evidence type="ECO:0000269" key="7">
    <source>
    </source>
</evidence>
<evidence type="ECO:0000269" key="8">
    <source>
    </source>
</evidence>
<evidence type="ECO:0000269" key="9">
    <source>
    </source>
</evidence>
<evidence type="ECO:0000269" key="10">
    <source>
    </source>
</evidence>
<evidence type="ECO:0000269" key="11">
    <source>
    </source>
</evidence>
<evidence type="ECO:0000269" key="12">
    <source>
    </source>
</evidence>
<evidence type="ECO:0000303" key="13">
    <source>
    </source>
</evidence>
<evidence type="ECO:0000305" key="14"/>
<evidence type="ECO:0007744" key="15">
    <source>
        <dbReference type="PDB" id="4MXW"/>
    </source>
</evidence>
<evidence type="ECO:0007744" key="16">
    <source>
    </source>
</evidence>
<protein>
    <recommendedName>
        <fullName>Tumor necrosis factor receptor superfamily member 3</fullName>
    </recommendedName>
    <alternativeName>
        <fullName>Lymphotoxin-beta receptor</fullName>
    </alternativeName>
    <alternativeName>
        <fullName>Tumor necrosis factor C receptor</fullName>
    </alternativeName>
    <alternativeName>
        <fullName>Tumor necrosis factor receptor 2-related protein</fullName>
    </alternativeName>
    <alternativeName>
        <fullName>Tumor necrosis factor receptor type III</fullName>
        <shortName>TNF-RIII</shortName>
        <shortName>TNFR-III</shortName>
    </alternativeName>
</protein>
<organism>
    <name type="scientific">Homo sapiens</name>
    <name type="common">Human</name>
    <dbReference type="NCBI Taxonomy" id="9606"/>
    <lineage>
        <taxon>Eukaryota</taxon>
        <taxon>Metazoa</taxon>
        <taxon>Chordata</taxon>
        <taxon>Craniata</taxon>
        <taxon>Vertebrata</taxon>
        <taxon>Euteleostomi</taxon>
        <taxon>Mammalia</taxon>
        <taxon>Eutheria</taxon>
        <taxon>Euarchontoglires</taxon>
        <taxon>Primates</taxon>
        <taxon>Haplorrhini</taxon>
        <taxon>Catarrhini</taxon>
        <taxon>Hominidae</taxon>
        <taxon>Homo</taxon>
    </lineage>
</organism>
<proteinExistence type="evidence at protein level"/>
<reference key="1">
    <citation type="journal article" date="1993" name="Genomics">
        <title>Construction and evaluation of a hncDNA library of human 12p transcribed sequences derived from a somatic cell hybrid.</title>
        <authorList>
            <person name="Baens M."/>
            <person name="Chaffanet M."/>
            <person name="Cassiman J.-J."/>
            <person name="van den Berghe H."/>
            <person name="Marynen P."/>
        </authorList>
    </citation>
    <scope>NUCLEOTIDE SEQUENCE [MRNA] (ISOFORM 1)</scope>
    <source>
        <tissue>Liver</tissue>
    </source>
</reference>
<reference key="2">
    <citation type="journal article" date="2004" name="Nat. Genet.">
        <title>Complete sequencing and characterization of 21,243 full-length human cDNAs.</title>
        <authorList>
            <person name="Ota T."/>
            <person name="Suzuki Y."/>
            <person name="Nishikawa T."/>
            <person name="Otsuki T."/>
            <person name="Sugiyama T."/>
            <person name="Irie R."/>
            <person name="Wakamatsu A."/>
            <person name="Hayashi K."/>
            <person name="Sato H."/>
            <person name="Nagai K."/>
            <person name="Kimura K."/>
            <person name="Makita H."/>
            <person name="Sekine M."/>
            <person name="Obayashi M."/>
            <person name="Nishi T."/>
            <person name="Shibahara T."/>
            <person name="Tanaka T."/>
            <person name="Ishii S."/>
            <person name="Yamamoto J."/>
            <person name="Saito K."/>
            <person name="Kawai Y."/>
            <person name="Isono Y."/>
            <person name="Nakamura Y."/>
            <person name="Nagahari K."/>
            <person name="Murakami K."/>
            <person name="Yasuda T."/>
            <person name="Iwayanagi T."/>
            <person name="Wagatsuma M."/>
            <person name="Shiratori A."/>
            <person name="Sudo H."/>
            <person name="Hosoiri T."/>
            <person name="Kaku Y."/>
            <person name="Kodaira H."/>
            <person name="Kondo H."/>
            <person name="Sugawara M."/>
            <person name="Takahashi M."/>
            <person name="Kanda K."/>
            <person name="Yokoi T."/>
            <person name="Furuya T."/>
            <person name="Kikkawa E."/>
            <person name="Omura Y."/>
            <person name="Abe K."/>
            <person name="Kamihara K."/>
            <person name="Katsuta N."/>
            <person name="Sato K."/>
            <person name="Tanikawa M."/>
            <person name="Yamazaki M."/>
            <person name="Ninomiya K."/>
            <person name="Ishibashi T."/>
            <person name="Yamashita H."/>
            <person name="Murakawa K."/>
            <person name="Fujimori K."/>
            <person name="Tanai H."/>
            <person name="Kimata M."/>
            <person name="Watanabe M."/>
            <person name="Hiraoka S."/>
            <person name="Chiba Y."/>
            <person name="Ishida S."/>
            <person name="Ono Y."/>
            <person name="Takiguchi S."/>
            <person name="Watanabe S."/>
            <person name="Yosida M."/>
            <person name="Hotuta T."/>
            <person name="Kusano J."/>
            <person name="Kanehori K."/>
            <person name="Takahashi-Fujii A."/>
            <person name="Hara H."/>
            <person name="Tanase T.-O."/>
            <person name="Nomura Y."/>
            <person name="Togiya S."/>
            <person name="Komai F."/>
            <person name="Hara R."/>
            <person name="Takeuchi K."/>
            <person name="Arita M."/>
            <person name="Imose N."/>
            <person name="Musashino K."/>
            <person name="Yuuki H."/>
            <person name="Oshima A."/>
            <person name="Sasaki N."/>
            <person name="Aotsuka S."/>
            <person name="Yoshikawa Y."/>
            <person name="Matsunawa H."/>
            <person name="Ichihara T."/>
            <person name="Shiohata N."/>
            <person name="Sano S."/>
            <person name="Moriya S."/>
            <person name="Momiyama H."/>
            <person name="Satoh N."/>
            <person name="Takami S."/>
            <person name="Terashima Y."/>
            <person name="Suzuki O."/>
            <person name="Nakagawa S."/>
            <person name="Senoh A."/>
            <person name="Mizoguchi H."/>
            <person name="Goto Y."/>
            <person name="Shimizu F."/>
            <person name="Wakebe H."/>
            <person name="Hishigaki H."/>
            <person name="Watanabe T."/>
            <person name="Sugiyama A."/>
            <person name="Takemoto M."/>
            <person name="Kawakami B."/>
            <person name="Yamazaki M."/>
            <person name="Watanabe K."/>
            <person name="Kumagai A."/>
            <person name="Itakura S."/>
            <person name="Fukuzumi Y."/>
            <person name="Fujimori Y."/>
            <person name="Komiyama M."/>
            <person name="Tashiro H."/>
            <person name="Tanigami A."/>
            <person name="Fujiwara T."/>
            <person name="Ono T."/>
            <person name="Yamada K."/>
            <person name="Fujii Y."/>
            <person name="Ozaki K."/>
            <person name="Hirao M."/>
            <person name="Ohmori Y."/>
            <person name="Kawabata A."/>
            <person name="Hikiji T."/>
            <person name="Kobatake N."/>
            <person name="Inagaki H."/>
            <person name="Ikema Y."/>
            <person name="Okamoto S."/>
            <person name="Okitani R."/>
            <person name="Kawakami T."/>
            <person name="Noguchi S."/>
            <person name="Itoh T."/>
            <person name="Shigeta K."/>
            <person name="Senba T."/>
            <person name="Matsumura K."/>
            <person name="Nakajima Y."/>
            <person name="Mizuno T."/>
            <person name="Morinaga M."/>
            <person name="Sasaki M."/>
            <person name="Togashi T."/>
            <person name="Oyama M."/>
            <person name="Hata H."/>
            <person name="Watanabe M."/>
            <person name="Komatsu T."/>
            <person name="Mizushima-Sugano J."/>
            <person name="Satoh T."/>
            <person name="Shirai Y."/>
            <person name="Takahashi Y."/>
            <person name="Nakagawa K."/>
            <person name="Okumura K."/>
            <person name="Nagase T."/>
            <person name="Nomura N."/>
            <person name="Kikuchi H."/>
            <person name="Masuho Y."/>
            <person name="Yamashita R."/>
            <person name="Nakai K."/>
            <person name="Yada T."/>
            <person name="Nakamura Y."/>
            <person name="Ohara O."/>
            <person name="Isogai T."/>
            <person name="Sugano S."/>
        </authorList>
    </citation>
    <scope>NUCLEOTIDE SEQUENCE [LARGE SCALE MRNA] (ISOFORM 2)</scope>
    <source>
        <tissue>Adrenal gland</tissue>
    </source>
</reference>
<reference key="3">
    <citation type="journal article" date="2006" name="Nature">
        <title>The finished DNA sequence of human chromosome 12.</title>
        <authorList>
            <person name="Scherer S.E."/>
            <person name="Muzny D.M."/>
            <person name="Buhay C.J."/>
            <person name="Chen R."/>
            <person name="Cree A."/>
            <person name="Ding Y."/>
            <person name="Dugan-Rocha S."/>
            <person name="Gill R."/>
            <person name="Gunaratne P."/>
            <person name="Harris R.A."/>
            <person name="Hawes A.C."/>
            <person name="Hernandez J."/>
            <person name="Hodgson A.V."/>
            <person name="Hume J."/>
            <person name="Jackson A."/>
            <person name="Khan Z.M."/>
            <person name="Kovar-Smith C."/>
            <person name="Lewis L.R."/>
            <person name="Lozado R.J."/>
            <person name="Metzker M.L."/>
            <person name="Milosavljevic A."/>
            <person name="Miner G.R."/>
            <person name="Montgomery K.T."/>
            <person name="Morgan M.B."/>
            <person name="Nazareth L.V."/>
            <person name="Scott G."/>
            <person name="Sodergren E."/>
            <person name="Song X.-Z."/>
            <person name="Steffen D."/>
            <person name="Lovering R.C."/>
            <person name="Wheeler D.A."/>
            <person name="Worley K.C."/>
            <person name="Yuan Y."/>
            <person name="Zhang Z."/>
            <person name="Adams C.Q."/>
            <person name="Ansari-Lari M.A."/>
            <person name="Ayele M."/>
            <person name="Brown M.J."/>
            <person name="Chen G."/>
            <person name="Chen Z."/>
            <person name="Clerc-Blankenburg K.P."/>
            <person name="Davis C."/>
            <person name="Delgado O."/>
            <person name="Dinh H.H."/>
            <person name="Draper H."/>
            <person name="Gonzalez-Garay M.L."/>
            <person name="Havlak P."/>
            <person name="Jackson L.R."/>
            <person name="Jacob L.S."/>
            <person name="Kelly S.H."/>
            <person name="Li L."/>
            <person name="Li Z."/>
            <person name="Liu J."/>
            <person name="Liu W."/>
            <person name="Lu J."/>
            <person name="Maheshwari M."/>
            <person name="Nguyen B.-V."/>
            <person name="Okwuonu G.O."/>
            <person name="Pasternak S."/>
            <person name="Perez L.M."/>
            <person name="Plopper F.J.H."/>
            <person name="Santibanez J."/>
            <person name="Shen H."/>
            <person name="Tabor P.E."/>
            <person name="Verduzco D."/>
            <person name="Waldron L."/>
            <person name="Wang Q."/>
            <person name="Williams G.A."/>
            <person name="Zhang J."/>
            <person name="Zhou J."/>
            <person name="Allen C.C."/>
            <person name="Amin A.G."/>
            <person name="Anyalebechi V."/>
            <person name="Bailey M."/>
            <person name="Barbaria J.A."/>
            <person name="Bimage K.E."/>
            <person name="Bryant N.P."/>
            <person name="Burch P.E."/>
            <person name="Burkett C.E."/>
            <person name="Burrell K.L."/>
            <person name="Calderon E."/>
            <person name="Cardenas V."/>
            <person name="Carter K."/>
            <person name="Casias K."/>
            <person name="Cavazos I."/>
            <person name="Cavazos S.R."/>
            <person name="Ceasar H."/>
            <person name="Chacko J."/>
            <person name="Chan S.N."/>
            <person name="Chavez D."/>
            <person name="Christopoulos C."/>
            <person name="Chu J."/>
            <person name="Cockrell R."/>
            <person name="Cox C.D."/>
            <person name="Dang M."/>
            <person name="Dathorne S.R."/>
            <person name="David R."/>
            <person name="Davis C.M."/>
            <person name="Davy-Carroll L."/>
            <person name="Deshazo D.R."/>
            <person name="Donlin J.E."/>
            <person name="D'Souza L."/>
            <person name="Eaves K.A."/>
            <person name="Egan A."/>
            <person name="Emery-Cohen A.J."/>
            <person name="Escotto M."/>
            <person name="Flagg N."/>
            <person name="Forbes L.D."/>
            <person name="Gabisi A.M."/>
            <person name="Garza M."/>
            <person name="Hamilton C."/>
            <person name="Henderson N."/>
            <person name="Hernandez O."/>
            <person name="Hines S."/>
            <person name="Hogues M.E."/>
            <person name="Huang M."/>
            <person name="Idlebird D.G."/>
            <person name="Johnson R."/>
            <person name="Jolivet A."/>
            <person name="Jones S."/>
            <person name="Kagan R."/>
            <person name="King L.M."/>
            <person name="Leal B."/>
            <person name="Lebow H."/>
            <person name="Lee S."/>
            <person name="LeVan J.M."/>
            <person name="Lewis L.C."/>
            <person name="London P."/>
            <person name="Lorensuhewa L.M."/>
            <person name="Loulseged H."/>
            <person name="Lovett D.A."/>
            <person name="Lucier A."/>
            <person name="Lucier R.L."/>
            <person name="Ma J."/>
            <person name="Madu R.C."/>
            <person name="Mapua P."/>
            <person name="Martindale A.D."/>
            <person name="Martinez E."/>
            <person name="Massey E."/>
            <person name="Mawhiney S."/>
            <person name="Meador M.G."/>
            <person name="Mendez S."/>
            <person name="Mercado C."/>
            <person name="Mercado I.C."/>
            <person name="Merritt C.E."/>
            <person name="Miner Z.L."/>
            <person name="Minja E."/>
            <person name="Mitchell T."/>
            <person name="Mohabbat F."/>
            <person name="Mohabbat K."/>
            <person name="Montgomery B."/>
            <person name="Moore N."/>
            <person name="Morris S."/>
            <person name="Munidasa M."/>
            <person name="Ngo R.N."/>
            <person name="Nguyen N.B."/>
            <person name="Nickerson E."/>
            <person name="Nwaokelemeh O.O."/>
            <person name="Nwokenkwo S."/>
            <person name="Obregon M."/>
            <person name="Oguh M."/>
            <person name="Oragunye N."/>
            <person name="Oviedo R.J."/>
            <person name="Parish B.J."/>
            <person name="Parker D.N."/>
            <person name="Parrish J."/>
            <person name="Parks K.L."/>
            <person name="Paul H.A."/>
            <person name="Payton B.A."/>
            <person name="Perez A."/>
            <person name="Perrin W."/>
            <person name="Pickens A."/>
            <person name="Primus E.L."/>
            <person name="Pu L.-L."/>
            <person name="Puazo M."/>
            <person name="Quiles M.M."/>
            <person name="Quiroz J.B."/>
            <person name="Rabata D."/>
            <person name="Reeves K."/>
            <person name="Ruiz S.J."/>
            <person name="Shao H."/>
            <person name="Sisson I."/>
            <person name="Sonaike T."/>
            <person name="Sorelle R.P."/>
            <person name="Sutton A.E."/>
            <person name="Svatek A.F."/>
            <person name="Svetz L.A."/>
            <person name="Tamerisa K.S."/>
            <person name="Taylor T.R."/>
            <person name="Teague B."/>
            <person name="Thomas N."/>
            <person name="Thorn R.D."/>
            <person name="Trejos Z.Y."/>
            <person name="Trevino B.K."/>
            <person name="Ukegbu O.N."/>
            <person name="Urban J.B."/>
            <person name="Vasquez L.I."/>
            <person name="Vera V.A."/>
            <person name="Villasana D.M."/>
            <person name="Wang L."/>
            <person name="Ward-Moore S."/>
            <person name="Warren J.T."/>
            <person name="Wei X."/>
            <person name="White F."/>
            <person name="Williamson A.L."/>
            <person name="Wleczyk R."/>
            <person name="Wooden H.S."/>
            <person name="Wooden S.H."/>
            <person name="Yen J."/>
            <person name="Yoon L."/>
            <person name="Yoon V."/>
            <person name="Zorrilla S.E."/>
            <person name="Nelson D."/>
            <person name="Kucherlapati R."/>
            <person name="Weinstock G."/>
            <person name="Gibbs R.A."/>
        </authorList>
    </citation>
    <scope>NUCLEOTIDE SEQUENCE [LARGE SCALE GENOMIC DNA]</scope>
</reference>
<reference key="4">
    <citation type="submission" date="2005-09" db="EMBL/GenBank/DDBJ databases">
        <authorList>
            <person name="Mural R.J."/>
            <person name="Istrail S."/>
            <person name="Sutton G.G."/>
            <person name="Florea L."/>
            <person name="Halpern A.L."/>
            <person name="Mobarry C.M."/>
            <person name="Lippert R."/>
            <person name="Walenz B."/>
            <person name="Shatkay H."/>
            <person name="Dew I."/>
            <person name="Miller J.R."/>
            <person name="Flanigan M.J."/>
            <person name="Edwards N.J."/>
            <person name="Bolanos R."/>
            <person name="Fasulo D."/>
            <person name="Halldorsson B.V."/>
            <person name="Hannenhalli S."/>
            <person name="Turner R."/>
            <person name="Yooseph S."/>
            <person name="Lu F."/>
            <person name="Nusskern D.R."/>
            <person name="Shue B.C."/>
            <person name="Zheng X.H."/>
            <person name="Zhong F."/>
            <person name="Delcher A.L."/>
            <person name="Huson D.H."/>
            <person name="Kravitz S.A."/>
            <person name="Mouchard L."/>
            <person name="Reinert K."/>
            <person name="Remington K.A."/>
            <person name="Clark A.G."/>
            <person name="Waterman M.S."/>
            <person name="Eichler E.E."/>
            <person name="Adams M.D."/>
            <person name="Hunkapiller M.W."/>
            <person name="Myers E.W."/>
            <person name="Venter J.C."/>
        </authorList>
    </citation>
    <scope>NUCLEOTIDE SEQUENCE [LARGE SCALE GENOMIC DNA]</scope>
</reference>
<reference key="5">
    <citation type="journal article" date="2004" name="Genome Res.">
        <title>The status, quality, and expansion of the NIH full-length cDNA project: the Mammalian Gene Collection (MGC).</title>
        <authorList>
            <consortium name="The MGC Project Team"/>
        </authorList>
    </citation>
    <scope>NUCLEOTIDE SEQUENCE [LARGE SCALE MRNA] (ISOFORM 1)</scope>
    <source>
        <tissue>Lung</tissue>
    </source>
</reference>
<reference key="6">
    <citation type="journal article" date="1994" name="Science">
        <title>A lymphotoxin-beta-specific receptor.</title>
        <authorList>
            <person name="Crowe P.D."/>
            <person name="VanArsdale T.L."/>
            <person name="Walter B.N."/>
            <person name="Ware C.F."/>
            <person name="Hession C."/>
            <person name="Ehrenfels B."/>
            <person name="Browning J.L."/>
            <person name="Din W.S."/>
            <person name="Goodwin R.G."/>
            <person name="Smith C.A."/>
        </authorList>
    </citation>
    <scope>FUNCTION</scope>
</reference>
<reference key="7">
    <citation type="journal article" date="1999" name="J. Biol. Chem.">
        <title>The cytoplasmic domain of the lymphotoxin-beta receptor mediates cell death in HeLa cells.</title>
        <authorList>
            <person name="Wu M.-Y."/>
            <person name="Wang P.-Y."/>
            <person name="Han S.-H."/>
            <person name="Hsieh S.-L."/>
        </authorList>
    </citation>
    <scope>CHARACTERIZATION</scope>
</reference>
<reference key="8">
    <citation type="journal article" date="2000" name="J. Biol. Chem.">
        <title>The lymphotoxin-beta receptor is necessary and sufficient for LIGHT-mediated apoptosis of tumor cells.</title>
        <authorList>
            <person name="Rooney I.A."/>
            <person name="Butrovich K.D."/>
            <person name="Glass A.A."/>
            <person name="Borboroglu S."/>
            <person name="Benedict C.A."/>
            <person name="Whitbeck J.C."/>
            <person name="Cohen G.H."/>
            <person name="Eisenberg R.J."/>
            <person name="Ware C.F."/>
        </authorList>
    </citation>
    <scope>FUNCTION</scope>
</reference>
<reference key="9">
    <citation type="journal article" date="1996" name="J. Biol. Chem.">
        <title>TRAF5, an activator of NF-kappaB and putative signal transducer for the lymphotoxin-beta receptor.</title>
        <authorList>
            <person name="Nakano H."/>
            <person name="Oshima H."/>
            <person name="Chung W."/>
            <person name="Williams-Abbott L."/>
            <person name="Ware C.F."/>
            <person name="Yagita H."/>
            <person name="Okumura K."/>
        </authorList>
    </citation>
    <scope>INTERACTION WITH TRAF3</scope>
</reference>
<reference key="10">
    <citation type="journal article" date="1997" name="J. Virol.">
        <title>Hepatitis C virus core protein interacts with the cytoplasmic tail of lymphotoxin-beta receptor.</title>
        <authorList>
            <person name="Matsumoto M."/>
            <person name="Hsieh T.-Y."/>
            <person name="Zhu N."/>
            <person name="VanArsdale T."/>
            <person name="Hwang S.B."/>
            <person name="Jeng K.-S."/>
            <person name="Gorbalenya A.E."/>
            <person name="Lo S.-Y."/>
            <person name="Ou J.-H."/>
            <person name="Ware C.F."/>
            <person name="Lai M.M.C."/>
        </authorList>
    </citation>
    <scope>INTERACTION WITH HCV CORE PROTEIN (MICROBIAL INFECTION)</scope>
</reference>
<reference key="11">
    <citation type="journal article" date="1998" name="Am. J. Pathol.">
        <title>TRAF-4 expression in epithelial progenitor cells. Analysis in normal adult, fetal, and tumor tissues.</title>
        <authorList>
            <person name="Krajewska M."/>
            <person name="Krajewski S."/>
            <person name="Zapata J.M."/>
            <person name="VanArsdale T."/>
            <person name="Gascoyne R.D."/>
            <person name="Berern K."/>
            <person name="McFadden D."/>
            <person name="Shabaik A."/>
            <person name="Hugh J."/>
            <person name="Reynolds A."/>
            <person name="Clevenger C.V."/>
            <person name="Reed J.C."/>
        </authorList>
    </citation>
    <scope>INTERACTION WITH TRAF4</scope>
</reference>
<reference key="12">
    <citation type="journal article" date="1998" name="Gene">
        <title>Cloning and characterization of a cDNA encoding the human homolog of tumor necrosis factor receptor-associated factor 5 (TRAF5).</title>
        <authorList>
            <person name="Mizushima S."/>
            <person name="Fujita M."/>
            <person name="Ishida T."/>
            <person name="Azuma S."/>
            <person name="Kato K."/>
            <person name="Hirai M."/>
            <person name="Otsuka M."/>
            <person name="Yamamoto T."/>
            <person name="Inoue J."/>
        </authorList>
    </citation>
    <scope>INTERACTION WITH TRAF5</scope>
</reference>
<reference key="13">
    <citation type="journal article" date="2008" name="Mol. Cell">
        <title>Kinase-selective enrichment enables quantitative phosphoproteomics of the kinome across the cell cycle.</title>
        <authorList>
            <person name="Daub H."/>
            <person name="Olsen J.V."/>
            <person name="Bairlein M."/>
            <person name="Gnad F."/>
            <person name="Oppermann F.S."/>
            <person name="Korner R."/>
            <person name="Greff Z."/>
            <person name="Keri G."/>
            <person name="Stemmann O."/>
            <person name="Mann M."/>
        </authorList>
    </citation>
    <scope>PHOSPHORYLATION [LARGE SCALE ANALYSIS] AT SER-323</scope>
    <scope>IDENTIFICATION BY MASS SPECTROMETRY [LARGE SCALE ANALYSIS]</scope>
    <source>
        <tissue>Cervix carcinoma</tissue>
    </source>
</reference>
<reference key="14">
    <citation type="journal article" date="2010" name="Sci. Signal.">
        <title>Quantitative phosphoproteomics reveals widespread full phosphorylation site occupancy during mitosis.</title>
        <authorList>
            <person name="Olsen J.V."/>
            <person name="Vermeulen M."/>
            <person name="Santamaria A."/>
            <person name="Kumar C."/>
            <person name="Miller M.L."/>
            <person name="Jensen L.J."/>
            <person name="Gnad F."/>
            <person name="Cox J."/>
            <person name="Jensen T.S."/>
            <person name="Nigg E.A."/>
            <person name="Brunak S."/>
            <person name="Mann M."/>
        </authorList>
    </citation>
    <scope>IDENTIFICATION BY MASS SPECTROMETRY [LARGE SCALE ANALYSIS]</scope>
    <source>
        <tissue>Cervix carcinoma</tissue>
    </source>
</reference>
<reference key="15">
    <citation type="journal article" date="2018" name="Nat. Immunol.">
        <title>Salivary factor LTRIN from Aedes aegypti facilitates the transmission of Zika virus by interfering with the lymphotoxin-beta receptor.</title>
        <authorList>
            <person name="Jin L."/>
            <person name="Guo X."/>
            <person name="Shen C."/>
            <person name="Hao X."/>
            <person name="Sun P."/>
            <person name="Li P."/>
            <person name="Xu T."/>
            <person name="Hu C."/>
            <person name="Rose O."/>
            <person name="Zhou H."/>
            <person name="Yang M."/>
            <person name="Qin C.F."/>
            <person name="Guo J."/>
            <person name="Peng H."/>
            <person name="Zhu M."/>
            <person name="Cheng G."/>
            <person name="Qi X."/>
            <person name="Lai R."/>
        </authorList>
    </citation>
    <scope>SUBUNIT</scope>
    <scope>INTERACTION WITH MOSQUITO LYMPHOTOXIN BETA RECEPTOR INHIBITOR</scope>
</reference>
<reference evidence="14" key="16">
    <citation type="journal article" date="2024" name="Biology">
        <title>Recognition of Aedes aegypti Mosquito Saliva Protein LTRIN by the Human Receptor LTbetaR for Controlling the Immune Response.</title>
        <authorList>
            <person name="Loh S.N."/>
            <person name="Anthony I.R."/>
            <person name="Gavor E."/>
            <person name="Lim X.S."/>
            <person name="Kini R.M."/>
            <person name="Mok Y.K."/>
            <person name="Sivaraman J."/>
        </authorList>
    </citation>
    <scope>INTERACTION WITH MOSQUITO LYMPHOTOXIN BETA RECEPTOR INHIBITOR</scope>
    <scope>MUTAGENESIS OF ASN-40 AND ASN-177</scope>
</reference>
<reference evidence="15" key="17">
    <citation type="journal article" date="2013" name="Proc. Natl. Acad. Sci. U.S.A.">
        <title>Dimerization of LTbetaR by LTalpha1beta2 is necessary and sufficient for signal transduction.</title>
        <authorList>
            <person name="Sudhamsu J."/>
            <person name="Yin J."/>
            <person name="Chiang E.Y."/>
            <person name="Starovasnik M.A."/>
            <person name="Grogan J.L."/>
            <person name="Hymowitz S.G."/>
        </authorList>
    </citation>
    <scope>STRUCTURE BY ELECTRON MICROSCOPY (3.60 ANGSTROMS) OF 41-211 IN COMPLEX WITH HETEROTRIMERIC LYMPHOTOXIN BETA (LTA-LTB-LTB) AND ANTI-LTA FAB</scope>
    <scope>FUNCTION</scope>
</reference>